<feature type="chain" id="PRO_0000113877" description="Protein GrpE">
    <location>
        <begin position="1"/>
        <end position="252"/>
    </location>
</feature>
<feature type="region of interest" description="Disordered" evidence="2">
    <location>
        <begin position="1"/>
        <end position="70"/>
    </location>
</feature>
<feature type="compositionally biased region" description="Polar residues" evidence="2">
    <location>
        <begin position="1"/>
        <end position="22"/>
    </location>
</feature>
<keyword id="KW-0143">Chaperone</keyword>
<keyword id="KW-0963">Cytoplasm</keyword>
<keyword id="KW-1185">Reference proteome</keyword>
<keyword id="KW-0346">Stress response</keyword>
<proteinExistence type="inferred from homology"/>
<protein>
    <recommendedName>
        <fullName evidence="1">Protein GrpE</fullName>
    </recommendedName>
    <alternativeName>
        <fullName evidence="1">HSP-70 cofactor</fullName>
    </alternativeName>
</protein>
<evidence type="ECO:0000255" key="1">
    <source>
        <dbReference type="HAMAP-Rule" id="MF_01151"/>
    </source>
</evidence>
<evidence type="ECO:0000256" key="2">
    <source>
        <dbReference type="SAM" id="MobiDB-lite"/>
    </source>
</evidence>
<accession>Q8DJB3</accession>
<name>GRPE_THEVB</name>
<organism>
    <name type="scientific">Thermosynechococcus vestitus (strain NIES-2133 / IAM M-273 / BP-1)</name>
    <dbReference type="NCBI Taxonomy" id="197221"/>
    <lineage>
        <taxon>Bacteria</taxon>
        <taxon>Bacillati</taxon>
        <taxon>Cyanobacteriota</taxon>
        <taxon>Cyanophyceae</taxon>
        <taxon>Acaryochloridales</taxon>
        <taxon>Thermosynechococcaceae</taxon>
        <taxon>Thermosynechococcus</taxon>
    </lineage>
</organism>
<reference key="1">
    <citation type="journal article" date="2002" name="DNA Res.">
        <title>Complete genome structure of the thermophilic cyanobacterium Thermosynechococcus elongatus BP-1.</title>
        <authorList>
            <person name="Nakamura Y."/>
            <person name="Kaneko T."/>
            <person name="Sato S."/>
            <person name="Ikeuchi M."/>
            <person name="Katoh H."/>
            <person name="Sasamoto S."/>
            <person name="Watanabe A."/>
            <person name="Iriguchi M."/>
            <person name="Kawashima K."/>
            <person name="Kimura T."/>
            <person name="Kishida Y."/>
            <person name="Kiyokawa C."/>
            <person name="Kohara M."/>
            <person name="Matsumoto M."/>
            <person name="Matsuno A."/>
            <person name="Nakazaki N."/>
            <person name="Shimpo S."/>
            <person name="Sugimoto M."/>
            <person name="Takeuchi C."/>
            <person name="Yamada M."/>
            <person name="Tabata S."/>
        </authorList>
    </citation>
    <scope>NUCLEOTIDE SEQUENCE [LARGE SCALE GENOMIC DNA]</scope>
    <source>
        <strain>NIES-2133 / IAM M-273 / BP-1</strain>
    </source>
</reference>
<dbReference type="EMBL" id="BA000039">
    <property type="protein sequence ID" value="BAC08866.1"/>
    <property type="molecule type" value="Genomic_DNA"/>
</dbReference>
<dbReference type="RefSeq" id="NP_682104.1">
    <property type="nucleotide sequence ID" value="NC_004113.1"/>
</dbReference>
<dbReference type="SMR" id="Q8DJB3"/>
<dbReference type="STRING" id="197221.gene:10747912"/>
<dbReference type="EnsemblBacteria" id="BAC08866">
    <property type="protein sequence ID" value="BAC08866"/>
    <property type="gene ID" value="BAC08866"/>
</dbReference>
<dbReference type="KEGG" id="tel:tlr1314"/>
<dbReference type="PATRIC" id="fig|197221.4.peg.1382"/>
<dbReference type="eggNOG" id="COG0576">
    <property type="taxonomic scope" value="Bacteria"/>
</dbReference>
<dbReference type="Proteomes" id="UP000000440">
    <property type="component" value="Chromosome"/>
</dbReference>
<dbReference type="GO" id="GO:0005737">
    <property type="term" value="C:cytoplasm"/>
    <property type="evidence" value="ECO:0007669"/>
    <property type="project" value="UniProtKB-SubCell"/>
</dbReference>
<dbReference type="GO" id="GO:0000774">
    <property type="term" value="F:adenyl-nucleotide exchange factor activity"/>
    <property type="evidence" value="ECO:0007669"/>
    <property type="project" value="InterPro"/>
</dbReference>
<dbReference type="GO" id="GO:0042803">
    <property type="term" value="F:protein homodimerization activity"/>
    <property type="evidence" value="ECO:0007669"/>
    <property type="project" value="InterPro"/>
</dbReference>
<dbReference type="GO" id="GO:0051087">
    <property type="term" value="F:protein-folding chaperone binding"/>
    <property type="evidence" value="ECO:0007669"/>
    <property type="project" value="InterPro"/>
</dbReference>
<dbReference type="GO" id="GO:0051082">
    <property type="term" value="F:unfolded protein binding"/>
    <property type="evidence" value="ECO:0007669"/>
    <property type="project" value="TreeGrafter"/>
</dbReference>
<dbReference type="GO" id="GO:0006457">
    <property type="term" value="P:protein folding"/>
    <property type="evidence" value="ECO:0007669"/>
    <property type="project" value="InterPro"/>
</dbReference>
<dbReference type="CDD" id="cd00446">
    <property type="entry name" value="GrpE"/>
    <property type="match status" value="1"/>
</dbReference>
<dbReference type="FunFam" id="2.30.22.10:FF:000001">
    <property type="entry name" value="Protein GrpE"/>
    <property type="match status" value="1"/>
</dbReference>
<dbReference type="Gene3D" id="3.90.20.20">
    <property type="match status" value="1"/>
</dbReference>
<dbReference type="Gene3D" id="2.30.22.10">
    <property type="entry name" value="Head domain of nucleotide exchange factor GrpE"/>
    <property type="match status" value="1"/>
</dbReference>
<dbReference type="HAMAP" id="MF_01151">
    <property type="entry name" value="GrpE"/>
    <property type="match status" value="1"/>
</dbReference>
<dbReference type="InterPro" id="IPR000740">
    <property type="entry name" value="GrpE"/>
</dbReference>
<dbReference type="InterPro" id="IPR013805">
    <property type="entry name" value="GrpE_coiled_coil"/>
</dbReference>
<dbReference type="InterPro" id="IPR009012">
    <property type="entry name" value="GrpE_head"/>
</dbReference>
<dbReference type="NCBIfam" id="NF010738">
    <property type="entry name" value="PRK14140.1"/>
    <property type="match status" value="1"/>
</dbReference>
<dbReference type="NCBIfam" id="NF010741">
    <property type="entry name" value="PRK14143.1"/>
    <property type="match status" value="1"/>
</dbReference>
<dbReference type="PANTHER" id="PTHR21237">
    <property type="entry name" value="GRPE PROTEIN"/>
    <property type="match status" value="1"/>
</dbReference>
<dbReference type="PANTHER" id="PTHR21237:SF23">
    <property type="entry name" value="GRPE PROTEIN HOMOLOG, MITOCHONDRIAL"/>
    <property type="match status" value="1"/>
</dbReference>
<dbReference type="Pfam" id="PF01025">
    <property type="entry name" value="GrpE"/>
    <property type="match status" value="1"/>
</dbReference>
<dbReference type="PRINTS" id="PR00773">
    <property type="entry name" value="GRPEPROTEIN"/>
</dbReference>
<dbReference type="SUPFAM" id="SSF58014">
    <property type="entry name" value="Coiled-coil domain of nucleotide exchange factor GrpE"/>
    <property type="match status" value="1"/>
</dbReference>
<dbReference type="SUPFAM" id="SSF51064">
    <property type="entry name" value="Head domain of nucleotide exchange factor GrpE"/>
    <property type="match status" value="1"/>
</dbReference>
<dbReference type="PROSITE" id="PS01071">
    <property type="entry name" value="GRPE"/>
    <property type="match status" value="1"/>
</dbReference>
<gene>
    <name evidence="1" type="primary">grpE</name>
    <name type="ordered locus">tlr1314</name>
</gene>
<sequence>MHNPQSRGHNLSQAMSDQTVTNPAAEAQEGEITPDTPDTVDKVENTPVENVENPAEATPGEEDQASEATSANAADLLEQIAALEAAKASLSQVVEERNSQYIRLAADFENFRKRTQREKEELELQIKCSVIADLLPVVDSFELARTHIQTETEAEEKIHRSYQGVYKQLVECLKRIGVSAMQAKGKPFDPNLHEAVLREATNEHPEGTVIEELKRGYMLGDRVLRHAMVKVAAPPEEGSASNTNPTNDVTDV</sequence>
<comment type="function">
    <text evidence="1">Participates actively in the response to hyperosmotic and heat shock by preventing the aggregation of stress-denatured proteins, in association with DnaK and GrpE. It is the nucleotide exchange factor for DnaK and may function as a thermosensor. Unfolded proteins bind initially to DnaJ; upon interaction with the DnaJ-bound protein, DnaK hydrolyzes its bound ATP, resulting in the formation of a stable complex. GrpE releases ADP from DnaK; ATP binding to DnaK triggers the release of the substrate protein, thus completing the reaction cycle. Several rounds of ATP-dependent interactions between DnaJ, DnaK and GrpE are required for fully efficient folding.</text>
</comment>
<comment type="subunit">
    <text evidence="1">Homodimer.</text>
</comment>
<comment type="subcellular location">
    <subcellularLocation>
        <location evidence="1">Cytoplasm</location>
    </subcellularLocation>
</comment>
<comment type="similarity">
    <text evidence="1">Belongs to the GrpE family.</text>
</comment>